<reference key="1">
    <citation type="journal article" date="2008" name="Genome Res.">
        <title>Genome sequence of the beta-rhizobium Cupriavidus taiwanensis and comparative genomics of rhizobia.</title>
        <authorList>
            <person name="Amadou C."/>
            <person name="Pascal G."/>
            <person name="Mangenot S."/>
            <person name="Glew M."/>
            <person name="Bontemps C."/>
            <person name="Capela D."/>
            <person name="Carrere S."/>
            <person name="Cruveiller S."/>
            <person name="Dossat C."/>
            <person name="Lajus A."/>
            <person name="Marchetti M."/>
            <person name="Poinsot V."/>
            <person name="Rouy Z."/>
            <person name="Servin B."/>
            <person name="Saad M."/>
            <person name="Schenowitz C."/>
            <person name="Barbe V."/>
            <person name="Batut J."/>
            <person name="Medigue C."/>
            <person name="Masson-Boivin C."/>
        </authorList>
    </citation>
    <scope>NUCLEOTIDE SEQUENCE [LARGE SCALE GENOMIC DNA]</scope>
    <source>
        <strain>DSM 17343 / BCRC 17206 / CCUG 44338 / CIP 107171 / LMG 19424 / R1</strain>
    </source>
</reference>
<sequence>MAKMQAKVQQDERDDGLREKMISVNRVTKVVKGGRILGFAALTVVGDGDGRIGMGKGKAKEVPVAVQKAMDEARRKMVKVSLKNGTLQHEVVGKHGAAKVLMMPAKEGTGVIAGGPMRAIFEVMGVTNVVTKSHGSTNPYNMVRATLDGLQKMSTPGEIAAKRGKSVEDILG</sequence>
<organism>
    <name type="scientific">Cupriavidus taiwanensis (strain DSM 17343 / BCRC 17206 / CCUG 44338 / CIP 107171 / LMG 19424 / R1)</name>
    <name type="common">Ralstonia taiwanensis (strain LMG 19424)</name>
    <dbReference type="NCBI Taxonomy" id="977880"/>
    <lineage>
        <taxon>Bacteria</taxon>
        <taxon>Pseudomonadati</taxon>
        <taxon>Pseudomonadota</taxon>
        <taxon>Betaproteobacteria</taxon>
        <taxon>Burkholderiales</taxon>
        <taxon>Burkholderiaceae</taxon>
        <taxon>Cupriavidus</taxon>
    </lineage>
</organism>
<proteinExistence type="inferred from homology"/>
<gene>
    <name evidence="1" type="primary">rpsE</name>
    <name type="ordered locus">RALTA_A2926</name>
</gene>
<keyword id="KW-0687">Ribonucleoprotein</keyword>
<keyword id="KW-0689">Ribosomal protein</keyword>
<keyword id="KW-0694">RNA-binding</keyword>
<keyword id="KW-0699">rRNA-binding</keyword>
<protein>
    <recommendedName>
        <fullName evidence="1">Small ribosomal subunit protein uS5</fullName>
    </recommendedName>
    <alternativeName>
        <fullName evidence="2">30S ribosomal protein S5</fullName>
    </alternativeName>
</protein>
<evidence type="ECO:0000255" key="1">
    <source>
        <dbReference type="HAMAP-Rule" id="MF_01307"/>
    </source>
</evidence>
<evidence type="ECO:0000305" key="2"/>
<feature type="chain" id="PRO_1000140852" description="Small ribosomal subunit protein uS5">
    <location>
        <begin position="1"/>
        <end position="172"/>
    </location>
</feature>
<feature type="domain" description="S5 DRBM" evidence="1">
    <location>
        <begin position="17"/>
        <end position="80"/>
    </location>
</feature>
<name>RS5_CUPTR</name>
<dbReference type="EMBL" id="CU633749">
    <property type="protein sequence ID" value="CAQ70851.1"/>
    <property type="molecule type" value="Genomic_DNA"/>
</dbReference>
<dbReference type="RefSeq" id="WP_006160449.1">
    <property type="nucleotide sequence ID" value="NC_010528.1"/>
</dbReference>
<dbReference type="SMR" id="B3R7F1"/>
<dbReference type="GeneID" id="98402994"/>
<dbReference type="KEGG" id="cti:RALTA_A2926"/>
<dbReference type="eggNOG" id="COG0098">
    <property type="taxonomic scope" value="Bacteria"/>
</dbReference>
<dbReference type="HOGENOM" id="CLU_065898_2_2_4"/>
<dbReference type="BioCyc" id="CTAI977880:RALTA_RS14270-MONOMER"/>
<dbReference type="Proteomes" id="UP000001692">
    <property type="component" value="Chromosome 1"/>
</dbReference>
<dbReference type="GO" id="GO:0015935">
    <property type="term" value="C:small ribosomal subunit"/>
    <property type="evidence" value="ECO:0007669"/>
    <property type="project" value="InterPro"/>
</dbReference>
<dbReference type="GO" id="GO:0019843">
    <property type="term" value="F:rRNA binding"/>
    <property type="evidence" value="ECO:0007669"/>
    <property type="project" value="UniProtKB-UniRule"/>
</dbReference>
<dbReference type="GO" id="GO:0003735">
    <property type="term" value="F:structural constituent of ribosome"/>
    <property type="evidence" value="ECO:0007669"/>
    <property type="project" value="InterPro"/>
</dbReference>
<dbReference type="GO" id="GO:0006412">
    <property type="term" value="P:translation"/>
    <property type="evidence" value="ECO:0007669"/>
    <property type="project" value="UniProtKB-UniRule"/>
</dbReference>
<dbReference type="FunFam" id="3.30.160.20:FF:000001">
    <property type="entry name" value="30S ribosomal protein S5"/>
    <property type="match status" value="1"/>
</dbReference>
<dbReference type="FunFam" id="3.30.230.10:FF:000002">
    <property type="entry name" value="30S ribosomal protein S5"/>
    <property type="match status" value="1"/>
</dbReference>
<dbReference type="Gene3D" id="3.30.160.20">
    <property type="match status" value="1"/>
</dbReference>
<dbReference type="Gene3D" id="3.30.230.10">
    <property type="match status" value="1"/>
</dbReference>
<dbReference type="HAMAP" id="MF_01307_B">
    <property type="entry name" value="Ribosomal_uS5_B"/>
    <property type="match status" value="1"/>
</dbReference>
<dbReference type="InterPro" id="IPR020568">
    <property type="entry name" value="Ribosomal_Su5_D2-typ_SF"/>
</dbReference>
<dbReference type="InterPro" id="IPR000851">
    <property type="entry name" value="Ribosomal_uS5"/>
</dbReference>
<dbReference type="InterPro" id="IPR005712">
    <property type="entry name" value="Ribosomal_uS5_bac-type"/>
</dbReference>
<dbReference type="InterPro" id="IPR005324">
    <property type="entry name" value="Ribosomal_uS5_C"/>
</dbReference>
<dbReference type="InterPro" id="IPR013810">
    <property type="entry name" value="Ribosomal_uS5_N"/>
</dbReference>
<dbReference type="InterPro" id="IPR018192">
    <property type="entry name" value="Ribosomal_uS5_N_CS"/>
</dbReference>
<dbReference type="InterPro" id="IPR014721">
    <property type="entry name" value="Ribsml_uS5_D2-typ_fold_subgr"/>
</dbReference>
<dbReference type="NCBIfam" id="TIGR01021">
    <property type="entry name" value="rpsE_bact"/>
    <property type="match status" value="1"/>
</dbReference>
<dbReference type="PANTHER" id="PTHR48277">
    <property type="entry name" value="MITOCHONDRIAL RIBOSOMAL PROTEIN S5"/>
    <property type="match status" value="1"/>
</dbReference>
<dbReference type="PANTHER" id="PTHR48277:SF1">
    <property type="entry name" value="MITOCHONDRIAL RIBOSOMAL PROTEIN S5"/>
    <property type="match status" value="1"/>
</dbReference>
<dbReference type="Pfam" id="PF00333">
    <property type="entry name" value="Ribosomal_S5"/>
    <property type="match status" value="1"/>
</dbReference>
<dbReference type="Pfam" id="PF03719">
    <property type="entry name" value="Ribosomal_S5_C"/>
    <property type="match status" value="1"/>
</dbReference>
<dbReference type="SUPFAM" id="SSF54768">
    <property type="entry name" value="dsRNA-binding domain-like"/>
    <property type="match status" value="1"/>
</dbReference>
<dbReference type="SUPFAM" id="SSF54211">
    <property type="entry name" value="Ribosomal protein S5 domain 2-like"/>
    <property type="match status" value="1"/>
</dbReference>
<dbReference type="PROSITE" id="PS00585">
    <property type="entry name" value="RIBOSOMAL_S5"/>
    <property type="match status" value="1"/>
</dbReference>
<dbReference type="PROSITE" id="PS50881">
    <property type="entry name" value="S5_DSRBD"/>
    <property type="match status" value="1"/>
</dbReference>
<accession>B3R7F1</accession>
<comment type="function">
    <text evidence="1">With S4 and S12 plays an important role in translational accuracy.</text>
</comment>
<comment type="function">
    <text evidence="1">Located at the back of the 30S subunit body where it stabilizes the conformation of the head with respect to the body.</text>
</comment>
<comment type="subunit">
    <text evidence="1">Part of the 30S ribosomal subunit. Contacts proteins S4 and S8.</text>
</comment>
<comment type="domain">
    <text>The N-terminal domain interacts with the head of the 30S subunit; the C-terminal domain interacts with the body and contacts protein S4. The interaction surface between S4 and S5 is involved in control of translational fidelity.</text>
</comment>
<comment type="similarity">
    <text evidence="1">Belongs to the universal ribosomal protein uS5 family.</text>
</comment>